<accession>P05338</accession>
<keyword id="KW-0238">DNA-binding</keyword>
<keyword id="KW-0716">Sensory transduction</keyword>
<keyword id="KW-0804">Transcription</keyword>
<keyword id="KW-0805">Transcription regulation</keyword>
<feature type="chain" id="PRO_0000184184" description="Transcriptional regulatory protein RcsA">
    <location>
        <begin position="1"/>
        <end position="207"/>
    </location>
</feature>
<feature type="domain" description="HTH luxR-type" evidence="1">
    <location>
        <begin position="131"/>
        <end position="196"/>
    </location>
</feature>
<feature type="DNA-binding region" description="H-T-H motif" evidence="1">
    <location>
        <begin position="155"/>
        <end position="174"/>
    </location>
</feature>
<comment type="function">
    <text evidence="1">Component of the Rcs signaling system, which controls transcription of numerous genes. Binds to DNA to regulate expression of genes.</text>
</comment>
<comment type="similarity">
    <text evidence="1">Belongs to the RcsA family.</text>
</comment>
<gene>
    <name evidence="1" type="primary">rcsA</name>
</gene>
<proteinExistence type="inferred from homology"/>
<dbReference type="EMBL" id="M15748">
    <property type="protein sequence ID" value="AAA25142.1"/>
    <property type="molecule type" value="Genomic_DNA"/>
</dbReference>
<dbReference type="SMR" id="P05338"/>
<dbReference type="STRING" id="548.EAG7_00783"/>
<dbReference type="GO" id="GO:0003677">
    <property type="term" value="F:DNA binding"/>
    <property type="evidence" value="ECO:0007669"/>
    <property type="project" value="UniProtKB-UniRule"/>
</dbReference>
<dbReference type="GO" id="GO:0006355">
    <property type="term" value="P:regulation of DNA-templated transcription"/>
    <property type="evidence" value="ECO:0007669"/>
    <property type="project" value="UniProtKB-UniRule"/>
</dbReference>
<dbReference type="CDD" id="cd06170">
    <property type="entry name" value="LuxR_C_like"/>
    <property type="match status" value="1"/>
</dbReference>
<dbReference type="Gene3D" id="1.10.10.10">
    <property type="entry name" value="Winged helix-like DNA-binding domain superfamily/Winged helix DNA-binding domain"/>
    <property type="match status" value="1"/>
</dbReference>
<dbReference type="HAMAP" id="MF_00982">
    <property type="entry name" value="RcsA"/>
    <property type="match status" value="1"/>
</dbReference>
<dbReference type="InterPro" id="IPR030866">
    <property type="entry name" value="RcsA"/>
</dbReference>
<dbReference type="InterPro" id="IPR016032">
    <property type="entry name" value="Sig_transdc_resp-reg_C-effctor"/>
</dbReference>
<dbReference type="InterPro" id="IPR000792">
    <property type="entry name" value="Tscrpt_reg_LuxR_C"/>
</dbReference>
<dbReference type="InterPro" id="IPR036388">
    <property type="entry name" value="WH-like_DNA-bd_sf"/>
</dbReference>
<dbReference type="NCBIfam" id="NF011940">
    <property type="entry name" value="PRK15411.1"/>
    <property type="match status" value="1"/>
</dbReference>
<dbReference type="Pfam" id="PF00196">
    <property type="entry name" value="GerE"/>
    <property type="match status" value="1"/>
</dbReference>
<dbReference type="PRINTS" id="PR00038">
    <property type="entry name" value="HTHLUXR"/>
</dbReference>
<dbReference type="SMART" id="SM00421">
    <property type="entry name" value="HTH_LUXR"/>
    <property type="match status" value="1"/>
</dbReference>
<dbReference type="SUPFAM" id="SSF46894">
    <property type="entry name" value="C-terminal effector domain of the bipartite response regulators"/>
    <property type="match status" value="1"/>
</dbReference>
<dbReference type="PROSITE" id="PS00622">
    <property type="entry name" value="HTH_LUXR_1"/>
    <property type="match status" value="1"/>
</dbReference>
<dbReference type="PROSITE" id="PS50043">
    <property type="entry name" value="HTH_LUXR_2"/>
    <property type="match status" value="1"/>
</dbReference>
<sequence length="207" mass="23366">MSTMIMDLCSYTRLGLTGYLTSRGIKKQEIVEVNSAADLQKHCTSCCPAVVFLNEDCFVHDDESNGIIRQIITQNPATLFVIFMSLANIHFDRYLRVRKNLLISSKSITPKDLDVILVNYLKYKNTSVGQLTLPTLSLSKTESNMLQMWMAGHGTSQISTQMNIKAKTVSSHKGNIKKKIQTHNKQVIYHIVRLTENITSGIQVNMR</sequence>
<evidence type="ECO:0000255" key="1">
    <source>
        <dbReference type="HAMAP-Rule" id="MF_00982"/>
    </source>
</evidence>
<name>RCSA_KLEAE</name>
<reference key="1">
    <citation type="journal article" date="1987" name="J. Gen. Microbiol.">
        <title>Isolation from Klebsiella and characterization of two rcs genes that activate colanic acid capsular biosynthesis in Escherichia coli.</title>
        <authorList>
            <person name="Allen P."/>
            <person name="Hart C.A."/>
            <person name="Saunders J.R."/>
        </authorList>
    </citation>
    <scope>NUCLEOTIDE SEQUENCE [GENOMIC DNA]</scope>
</reference>
<protein>
    <recommendedName>
        <fullName evidence="1">Transcriptional regulatory protein RcsA</fullName>
    </recommendedName>
</protein>
<organism>
    <name type="scientific">Klebsiella aerogenes</name>
    <name type="common">Enterobacter aerogenes</name>
    <dbReference type="NCBI Taxonomy" id="548"/>
    <lineage>
        <taxon>Bacteria</taxon>
        <taxon>Pseudomonadati</taxon>
        <taxon>Pseudomonadota</taxon>
        <taxon>Gammaproteobacteria</taxon>
        <taxon>Enterobacterales</taxon>
        <taxon>Enterobacteriaceae</taxon>
        <taxon>Klebsiella/Raoultella group</taxon>
        <taxon>Klebsiella</taxon>
    </lineage>
</organism>